<evidence type="ECO:0000255" key="1">
    <source>
        <dbReference type="HAMAP-Rule" id="MF_00592"/>
    </source>
</evidence>
<gene>
    <name evidence="1" type="primary">deoC</name>
    <name type="ordered locus">ECS88_5062</name>
</gene>
<sequence>MTDLKASSLRALKLMDLTTLNDDDTDEKVIALCHQAKTPVGNTAAICIYPRFIPIARKTLKEQGTPEIRIATVTNFPHGNDDIDIALAETRAAIAYGADEVDVVFPYRALMAGNEQVGFDLVKACKEACAAANVLLKVIIETGELKDEALIRKASEISIKAGADFIKTSTGKVAVNATPESARIMMEVIRDMGVEKTVGFKPAGGVRTAEDAQKYLAIADELFGADWADARHYRFGASSLLASLLKALGHGDGKSASSY</sequence>
<organism>
    <name type="scientific">Escherichia coli O45:K1 (strain S88 / ExPEC)</name>
    <dbReference type="NCBI Taxonomy" id="585035"/>
    <lineage>
        <taxon>Bacteria</taxon>
        <taxon>Pseudomonadati</taxon>
        <taxon>Pseudomonadota</taxon>
        <taxon>Gammaproteobacteria</taxon>
        <taxon>Enterobacterales</taxon>
        <taxon>Enterobacteriaceae</taxon>
        <taxon>Escherichia</taxon>
    </lineage>
</organism>
<keyword id="KW-0963">Cytoplasm</keyword>
<keyword id="KW-0456">Lyase</keyword>
<keyword id="KW-1185">Reference proteome</keyword>
<keyword id="KW-0704">Schiff base</keyword>
<comment type="function">
    <text evidence="1">Catalyzes a reversible aldol reaction between acetaldehyde and D-glyceraldehyde 3-phosphate to generate 2-deoxy-D-ribose 5-phosphate.</text>
</comment>
<comment type="catalytic activity">
    <reaction evidence="1">
        <text>2-deoxy-D-ribose 5-phosphate = D-glyceraldehyde 3-phosphate + acetaldehyde</text>
        <dbReference type="Rhea" id="RHEA:12821"/>
        <dbReference type="ChEBI" id="CHEBI:15343"/>
        <dbReference type="ChEBI" id="CHEBI:59776"/>
        <dbReference type="ChEBI" id="CHEBI:62877"/>
        <dbReference type="EC" id="4.1.2.4"/>
    </reaction>
</comment>
<comment type="pathway">
    <text evidence="1">Carbohydrate degradation; 2-deoxy-D-ribose 1-phosphate degradation; D-glyceraldehyde 3-phosphate and acetaldehyde from 2-deoxy-alpha-D-ribose 1-phosphate: step 2/2.</text>
</comment>
<comment type="subcellular location">
    <subcellularLocation>
        <location evidence="1">Cytoplasm</location>
    </subcellularLocation>
</comment>
<comment type="similarity">
    <text evidence="1">Belongs to the DeoC/FbaB aldolase family. DeoC type 2 subfamily.</text>
</comment>
<proteinExistence type="inferred from homology"/>
<protein>
    <recommendedName>
        <fullName evidence="1">Deoxyribose-phosphate aldolase</fullName>
        <shortName evidence="1">DERA</shortName>
        <ecNumber evidence="1">4.1.2.4</ecNumber>
    </recommendedName>
    <alternativeName>
        <fullName evidence="1">2-deoxy-D-ribose 5-phosphate aldolase</fullName>
    </alternativeName>
    <alternativeName>
        <fullName evidence="1">Phosphodeoxyriboaldolase</fullName>
        <shortName evidence="1">Deoxyriboaldolase</shortName>
    </alternativeName>
</protein>
<name>DEOC_ECO45</name>
<dbReference type="EC" id="4.1.2.4" evidence="1"/>
<dbReference type="EMBL" id="CU928161">
    <property type="protein sequence ID" value="CAR06201.1"/>
    <property type="molecule type" value="Genomic_DNA"/>
</dbReference>
<dbReference type="RefSeq" id="WP_001298497.1">
    <property type="nucleotide sequence ID" value="NC_011742.1"/>
</dbReference>
<dbReference type="SMR" id="B7MNI8"/>
<dbReference type="GeneID" id="86862495"/>
<dbReference type="KEGG" id="ecz:ECS88_5062"/>
<dbReference type="HOGENOM" id="CLU_053595_3_1_6"/>
<dbReference type="UniPathway" id="UPA00002">
    <property type="reaction ID" value="UER00468"/>
</dbReference>
<dbReference type="Proteomes" id="UP000000747">
    <property type="component" value="Chromosome"/>
</dbReference>
<dbReference type="GO" id="GO:0005737">
    <property type="term" value="C:cytoplasm"/>
    <property type="evidence" value="ECO:0007669"/>
    <property type="project" value="UniProtKB-SubCell"/>
</dbReference>
<dbReference type="GO" id="GO:0004139">
    <property type="term" value="F:deoxyribose-phosphate aldolase activity"/>
    <property type="evidence" value="ECO:0007669"/>
    <property type="project" value="UniProtKB-UniRule"/>
</dbReference>
<dbReference type="GO" id="GO:0006018">
    <property type="term" value="P:2-deoxyribose 1-phosphate catabolic process"/>
    <property type="evidence" value="ECO:0007669"/>
    <property type="project" value="UniProtKB-UniRule"/>
</dbReference>
<dbReference type="GO" id="GO:0016052">
    <property type="term" value="P:carbohydrate catabolic process"/>
    <property type="evidence" value="ECO:0007669"/>
    <property type="project" value="TreeGrafter"/>
</dbReference>
<dbReference type="GO" id="GO:0009264">
    <property type="term" value="P:deoxyribonucleotide catabolic process"/>
    <property type="evidence" value="ECO:0007669"/>
    <property type="project" value="InterPro"/>
</dbReference>
<dbReference type="CDD" id="cd00959">
    <property type="entry name" value="DeoC"/>
    <property type="match status" value="1"/>
</dbReference>
<dbReference type="FunFam" id="3.20.20.70:FF:000034">
    <property type="entry name" value="Deoxyribose-phosphate aldolase"/>
    <property type="match status" value="1"/>
</dbReference>
<dbReference type="Gene3D" id="3.20.20.70">
    <property type="entry name" value="Aldolase class I"/>
    <property type="match status" value="1"/>
</dbReference>
<dbReference type="HAMAP" id="MF_00592">
    <property type="entry name" value="DeoC_type2"/>
    <property type="match status" value="1"/>
</dbReference>
<dbReference type="InterPro" id="IPR013785">
    <property type="entry name" value="Aldolase_TIM"/>
</dbReference>
<dbReference type="InterPro" id="IPR011343">
    <property type="entry name" value="DeoC"/>
</dbReference>
<dbReference type="InterPro" id="IPR002915">
    <property type="entry name" value="DeoC/FbaB/LacD_aldolase"/>
</dbReference>
<dbReference type="InterPro" id="IPR023649">
    <property type="entry name" value="DeoC_typeII"/>
</dbReference>
<dbReference type="NCBIfam" id="TIGR00126">
    <property type="entry name" value="deoC"/>
    <property type="match status" value="1"/>
</dbReference>
<dbReference type="PANTHER" id="PTHR10889">
    <property type="entry name" value="DEOXYRIBOSE-PHOSPHATE ALDOLASE"/>
    <property type="match status" value="1"/>
</dbReference>
<dbReference type="PANTHER" id="PTHR10889:SF3">
    <property type="entry name" value="DEOXYRIBOSE-PHOSPHATE ALDOLASE"/>
    <property type="match status" value="1"/>
</dbReference>
<dbReference type="Pfam" id="PF01791">
    <property type="entry name" value="DeoC"/>
    <property type="match status" value="1"/>
</dbReference>
<dbReference type="PIRSF" id="PIRSF001357">
    <property type="entry name" value="DeoC"/>
    <property type="match status" value="1"/>
</dbReference>
<dbReference type="SMART" id="SM01133">
    <property type="entry name" value="DeoC"/>
    <property type="match status" value="1"/>
</dbReference>
<dbReference type="SUPFAM" id="SSF51569">
    <property type="entry name" value="Aldolase"/>
    <property type="match status" value="1"/>
</dbReference>
<reference key="1">
    <citation type="journal article" date="2009" name="PLoS Genet.">
        <title>Organised genome dynamics in the Escherichia coli species results in highly diverse adaptive paths.</title>
        <authorList>
            <person name="Touchon M."/>
            <person name="Hoede C."/>
            <person name="Tenaillon O."/>
            <person name="Barbe V."/>
            <person name="Baeriswyl S."/>
            <person name="Bidet P."/>
            <person name="Bingen E."/>
            <person name="Bonacorsi S."/>
            <person name="Bouchier C."/>
            <person name="Bouvet O."/>
            <person name="Calteau A."/>
            <person name="Chiapello H."/>
            <person name="Clermont O."/>
            <person name="Cruveiller S."/>
            <person name="Danchin A."/>
            <person name="Diard M."/>
            <person name="Dossat C."/>
            <person name="Karoui M.E."/>
            <person name="Frapy E."/>
            <person name="Garry L."/>
            <person name="Ghigo J.M."/>
            <person name="Gilles A.M."/>
            <person name="Johnson J."/>
            <person name="Le Bouguenec C."/>
            <person name="Lescat M."/>
            <person name="Mangenot S."/>
            <person name="Martinez-Jehanne V."/>
            <person name="Matic I."/>
            <person name="Nassif X."/>
            <person name="Oztas S."/>
            <person name="Petit M.A."/>
            <person name="Pichon C."/>
            <person name="Rouy Z."/>
            <person name="Ruf C.S."/>
            <person name="Schneider D."/>
            <person name="Tourret J."/>
            <person name="Vacherie B."/>
            <person name="Vallenet D."/>
            <person name="Medigue C."/>
            <person name="Rocha E.P.C."/>
            <person name="Denamur E."/>
        </authorList>
    </citation>
    <scope>NUCLEOTIDE SEQUENCE [LARGE SCALE GENOMIC DNA]</scope>
    <source>
        <strain>S88 / ExPEC</strain>
    </source>
</reference>
<accession>B7MNI8</accession>
<feature type="chain" id="PRO_1000129799" description="Deoxyribose-phosphate aldolase">
    <location>
        <begin position="1"/>
        <end position="259"/>
    </location>
</feature>
<feature type="active site" description="Proton donor/acceptor" evidence="1">
    <location>
        <position position="102"/>
    </location>
</feature>
<feature type="active site" description="Schiff-base intermediate with acetaldehyde" evidence="1">
    <location>
        <position position="167"/>
    </location>
</feature>
<feature type="active site" description="Proton donor/acceptor" evidence="1">
    <location>
        <position position="201"/>
    </location>
</feature>